<evidence type="ECO:0000255" key="1">
    <source>
        <dbReference type="HAMAP-Rule" id="MF_01454"/>
    </source>
</evidence>
<evidence type="ECO:0000255" key="2">
    <source>
        <dbReference type="PROSITE-ProRule" id="PRU01231"/>
    </source>
</evidence>
<protein>
    <recommendedName>
        <fullName evidence="1">GTPase Obg</fullName>
        <ecNumber evidence="1">3.6.5.-</ecNumber>
    </recommendedName>
    <alternativeName>
        <fullName evidence="1">GTP-binding protein Obg</fullName>
    </alternativeName>
</protein>
<accession>B0TWK7</accession>
<proteinExistence type="inferred from homology"/>
<name>OBG_FRAP2</name>
<sequence>MRFVDEVVIKLQAGKGGNGCVSFRREKYVPRGGPDGGDGGHGGSIYLKADENVNTLIDYRYKREYYAENGRPGEGRNCYGKAGEDMYLIVPVGTSVFDLETNKKIGEVLNNGEILKLVSGGKRGIGNTHFKSSTNQAPRKFTLGEEGEYKEVRLELNLLADIALLGLPNAGKSTLIRSVSEATPKVADYPFTTMYPHLGVVKVGVDSFVMADIPGVIEGAAEGAGLGLRFLKHLTRARCVLHVVDICPFNESDPVENYFAVEKELKKYSEELYDKPRFLVINKIDLLADEVEEKCQEFVKQIGYEGNYYMISAAMKKGTEELAKKLNEFLHKQE</sequence>
<dbReference type="EC" id="3.6.5.-" evidence="1"/>
<dbReference type="EMBL" id="CP000937">
    <property type="protein sequence ID" value="ABZ87115.1"/>
    <property type="molecule type" value="Genomic_DNA"/>
</dbReference>
<dbReference type="SMR" id="B0TWK7"/>
<dbReference type="KEGG" id="fph:Fphi_0892"/>
<dbReference type="eggNOG" id="COG0536">
    <property type="taxonomic scope" value="Bacteria"/>
</dbReference>
<dbReference type="HOGENOM" id="CLU_011747_2_0_6"/>
<dbReference type="GO" id="GO:0005737">
    <property type="term" value="C:cytoplasm"/>
    <property type="evidence" value="ECO:0007669"/>
    <property type="project" value="UniProtKB-SubCell"/>
</dbReference>
<dbReference type="GO" id="GO:0005525">
    <property type="term" value="F:GTP binding"/>
    <property type="evidence" value="ECO:0007669"/>
    <property type="project" value="UniProtKB-UniRule"/>
</dbReference>
<dbReference type="GO" id="GO:0003924">
    <property type="term" value="F:GTPase activity"/>
    <property type="evidence" value="ECO:0007669"/>
    <property type="project" value="UniProtKB-UniRule"/>
</dbReference>
<dbReference type="GO" id="GO:0000287">
    <property type="term" value="F:magnesium ion binding"/>
    <property type="evidence" value="ECO:0007669"/>
    <property type="project" value="InterPro"/>
</dbReference>
<dbReference type="GO" id="GO:0042254">
    <property type="term" value="P:ribosome biogenesis"/>
    <property type="evidence" value="ECO:0007669"/>
    <property type="project" value="UniProtKB-UniRule"/>
</dbReference>
<dbReference type="CDD" id="cd01898">
    <property type="entry name" value="Obg"/>
    <property type="match status" value="1"/>
</dbReference>
<dbReference type="FunFam" id="2.70.210.12:FF:000001">
    <property type="entry name" value="GTPase Obg"/>
    <property type="match status" value="1"/>
</dbReference>
<dbReference type="Gene3D" id="2.70.210.12">
    <property type="entry name" value="GTP1/OBG domain"/>
    <property type="match status" value="1"/>
</dbReference>
<dbReference type="Gene3D" id="3.40.50.300">
    <property type="entry name" value="P-loop containing nucleotide triphosphate hydrolases"/>
    <property type="match status" value="1"/>
</dbReference>
<dbReference type="HAMAP" id="MF_01454">
    <property type="entry name" value="GTPase_Obg"/>
    <property type="match status" value="1"/>
</dbReference>
<dbReference type="InterPro" id="IPR031167">
    <property type="entry name" value="G_OBG"/>
</dbReference>
<dbReference type="InterPro" id="IPR006073">
    <property type="entry name" value="GTP-bd"/>
</dbReference>
<dbReference type="InterPro" id="IPR014100">
    <property type="entry name" value="GTP-bd_Obg/CgtA"/>
</dbReference>
<dbReference type="InterPro" id="IPR006074">
    <property type="entry name" value="GTP1-OBG_CS"/>
</dbReference>
<dbReference type="InterPro" id="IPR006169">
    <property type="entry name" value="GTP1_OBG_dom"/>
</dbReference>
<dbReference type="InterPro" id="IPR036726">
    <property type="entry name" value="GTP1_OBG_dom_sf"/>
</dbReference>
<dbReference type="InterPro" id="IPR045086">
    <property type="entry name" value="OBG_GTPase"/>
</dbReference>
<dbReference type="InterPro" id="IPR027417">
    <property type="entry name" value="P-loop_NTPase"/>
</dbReference>
<dbReference type="NCBIfam" id="TIGR02729">
    <property type="entry name" value="Obg_CgtA"/>
    <property type="match status" value="1"/>
</dbReference>
<dbReference type="NCBIfam" id="NF008955">
    <property type="entry name" value="PRK12297.1"/>
    <property type="match status" value="1"/>
</dbReference>
<dbReference type="NCBIfam" id="NF008956">
    <property type="entry name" value="PRK12299.1"/>
    <property type="match status" value="1"/>
</dbReference>
<dbReference type="PANTHER" id="PTHR11702">
    <property type="entry name" value="DEVELOPMENTALLY REGULATED GTP-BINDING PROTEIN-RELATED"/>
    <property type="match status" value="1"/>
</dbReference>
<dbReference type="PANTHER" id="PTHR11702:SF31">
    <property type="entry name" value="MITOCHONDRIAL RIBOSOME-ASSOCIATED GTPASE 2"/>
    <property type="match status" value="1"/>
</dbReference>
<dbReference type="Pfam" id="PF01018">
    <property type="entry name" value="GTP1_OBG"/>
    <property type="match status" value="1"/>
</dbReference>
<dbReference type="Pfam" id="PF01926">
    <property type="entry name" value="MMR_HSR1"/>
    <property type="match status" value="1"/>
</dbReference>
<dbReference type="PIRSF" id="PIRSF002401">
    <property type="entry name" value="GTP_bd_Obg/CgtA"/>
    <property type="match status" value="1"/>
</dbReference>
<dbReference type="PRINTS" id="PR00326">
    <property type="entry name" value="GTP1OBG"/>
</dbReference>
<dbReference type="SUPFAM" id="SSF82051">
    <property type="entry name" value="Obg GTP-binding protein N-terminal domain"/>
    <property type="match status" value="1"/>
</dbReference>
<dbReference type="SUPFAM" id="SSF52540">
    <property type="entry name" value="P-loop containing nucleoside triphosphate hydrolases"/>
    <property type="match status" value="1"/>
</dbReference>
<dbReference type="PROSITE" id="PS51710">
    <property type="entry name" value="G_OBG"/>
    <property type="match status" value="1"/>
</dbReference>
<dbReference type="PROSITE" id="PS00905">
    <property type="entry name" value="GTP1_OBG"/>
    <property type="match status" value="1"/>
</dbReference>
<dbReference type="PROSITE" id="PS51883">
    <property type="entry name" value="OBG"/>
    <property type="match status" value="1"/>
</dbReference>
<comment type="function">
    <text evidence="1">An essential GTPase which binds GTP, GDP and possibly (p)ppGpp with moderate affinity, with high nucleotide exchange rates and a fairly low GTP hydrolysis rate. Plays a role in control of the cell cycle, stress response, ribosome biogenesis and in those bacteria that undergo differentiation, in morphogenesis control.</text>
</comment>
<comment type="cofactor">
    <cofactor evidence="1">
        <name>Mg(2+)</name>
        <dbReference type="ChEBI" id="CHEBI:18420"/>
    </cofactor>
</comment>
<comment type="subunit">
    <text evidence="1">Monomer.</text>
</comment>
<comment type="subcellular location">
    <subcellularLocation>
        <location evidence="1">Cytoplasm</location>
    </subcellularLocation>
</comment>
<comment type="similarity">
    <text evidence="1">Belongs to the TRAFAC class OBG-HflX-like GTPase superfamily. OBG GTPase family.</text>
</comment>
<keyword id="KW-0963">Cytoplasm</keyword>
<keyword id="KW-0342">GTP-binding</keyword>
<keyword id="KW-0378">Hydrolase</keyword>
<keyword id="KW-0460">Magnesium</keyword>
<keyword id="KW-0479">Metal-binding</keyword>
<keyword id="KW-0547">Nucleotide-binding</keyword>
<feature type="chain" id="PRO_0000385935" description="GTPase Obg">
    <location>
        <begin position="1"/>
        <end position="334"/>
    </location>
</feature>
<feature type="domain" description="Obg" evidence="2">
    <location>
        <begin position="1"/>
        <end position="159"/>
    </location>
</feature>
<feature type="domain" description="OBG-type G" evidence="1">
    <location>
        <begin position="160"/>
        <end position="331"/>
    </location>
</feature>
<feature type="binding site" evidence="1">
    <location>
        <begin position="166"/>
        <end position="173"/>
    </location>
    <ligand>
        <name>GTP</name>
        <dbReference type="ChEBI" id="CHEBI:37565"/>
    </ligand>
</feature>
<feature type="binding site" evidence="1">
    <location>
        <position position="173"/>
    </location>
    <ligand>
        <name>Mg(2+)</name>
        <dbReference type="ChEBI" id="CHEBI:18420"/>
    </ligand>
</feature>
<feature type="binding site" evidence="1">
    <location>
        <begin position="191"/>
        <end position="195"/>
    </location>
    <ligand>
        <name>GTP</name>
        <dbReference type="ChEBI" id="CHEBI:37565"/>
    </ligand>
</feature>
<feature type="binding site" evidence="1">
    <location>
        <position position="193"/>
    </location>
    <ligand>
        <name>Mg(2+)</name>
        <dbReference type="ChEBI" id="CHEBI:18420"/>
    </ligand>
</feature>
<feature type="binding site" evidence="1">
    <location>
        <begin position="212"/>
        <end position="215"/>
    </location>
    <ligand>
        <name>GTP</name>
        <dbReference type="ChEBI" id="CHEBI:37565"/>
    </ligand>
</feature>
<feature type="binding site" evidence="1">
    <location>
        <begin position="282"/>
        <end position="285"/>
    </location>
    <ligand>
        <name>GTP</name>
        <dbReference type="ChEBI" id="CHEBI:37565"/>
    </ligand>
</feature>
<feature type="binding site" evidence="1">
    <location>
        <begin position="312"/>
        <end position="314"/>
    </location>
    <ligand>
        <name>GTP</name>
        <dbReference type="ChEBI" id="CHEBI:37565"/>
    </ligand>
</feature>
<gene>
    <name evidence="1" type="primary">obg</name>
    <name type="ordered locus">Fphi_0892</name>
</gene>
<organism>
    <name type="scientific">Francisella philomiragia subsp. philomiragia (strain ATCC 25017 / CCUG 19701 / FSC 153 / O#319-036)</name>
    <dbReference type="NCBI Taxonomy" id="484022"/>
    <lineage>
        <taxon>Bacteria</taxon>
        <taxon>Pseudomonadati</taxon>
        <taxon>Pseudomonadota</taxon>
        <taxon>Gammaproteobacteria</taxon>
        <taxon>Thiotrichales</taxon>
        <taxon>Francisellaceae</taxon>
        <taxon>Francisella</taxon>
    </lineage>
</organism>
<reference key="1">
    <citation type="submission" date="2007-12" db="EMBL/GenBank/DDBJ databases">
        <title>Complete sequence of chromosome of Francisella philomiragia subsp. philomiragia ATCC 25017.</title>
        <authorList>
            <consortium name="US DOE Joint Genome Institute"/>
            <person name="Copeland A."/>
            <person name="Lucas S."/>
            <person name="Lapidus A."/>
            <person name="Barry K."/>
            <person name="Detter J.C."/>
            <person name="Glavina del Rio T."/>
            <person name="Hammon N."/>
            <person name="Israni S."/>
            <person name="Dalin E."/>
            <person name="Tice H."/>
            <person name="Pitluck S."/>
            <person name="Chain P."/>
            <person name="Malfatti S."/>
            <person name="Shin M."/>
            <person name="Vergez L."/>
            <person name="Schmutz J."/>
            <person name="Larimer F."/>
            <person name="Land M."/>
            <person name="Hauser L."/>
            <person name="Richardson P."/>
        </authorList>
    </citation>
    <scope>NUCLEOTIDE SEQUENCE [LARGE SCALE GENOMIC DNA]</scope>
    <source>
        <strain>ATCC 25017 / CCUG 19701 / FSC 153 / O#319-036</strain>
    </source>
</reference>